<keyword id="KW-0067">ATP-binding</keyword>
<keyword id="KW-0963">Cytoplasm</keyword>
<keyword id="KW-0460">Magnesium</keyword>
<keyword id="KW-0479">Metal-binding</keyword>
<keyword id="KW-0547">Nucleotide-binding</keyword>
<keyword id="KW-0554">One-carbon metabolism</keyword>
<keyword id="KW-0630">Potassium</keyword>
<keyword id="KW-0808">Transferase</keyword>
<accession>B9K7H2</accession>
<proteinExistence type="inferred from homology"/>
<reference key="1">
    <citation type="submission" date="2007-11" db="EMBL/GenBank/DDBJ databases">
        <title>The genome sequence of the hyperthermophilic bacterium Thermotoga neapolitana.</title>
        <authorList>
            <person name="Lim S.K."/>
            <person name="Kim J.S."/>
            <person name="Cha S.H."/>
            <person name="Park B.C."/>
            <person name="Lee D.S."/>
            <person name="Tae H.S."/>
            <person name="Kim S.-J."/>
            <person name="Kim J.J."/>
            <person name="Park K.J."/>
            <person name="Lee S.Y."/>
        </authorList>
    </citation>
    <scope>NUCLEOTIDE SEQUENCE [LARGE SCALE GENOMIC DNA]</scope>
    <source>
        <strain>ATCC 49049 / DSM 4359 / NBRC 107923 / NS-E</strain>
    </source>
</reference>
<dbReference type="EC" id="2.5.1.6" evidence="1"/>
<dbReference type="EMBL" id="CP000916">
    <property type="protein sequence ID" value="ACM22905.1"/>
    <property type="molecule type" value="Genomic_DNA"/>
</dbReference>
<dbReference type="RefSeq" id="WP_015919224.1">
    <property type="nucleotide sequence ID" value="NC_011978.1"/>
</dbReference>
<dbReference type="SMR" id="B9K7H2"/>
<dbReference type="STRING" id="309803.CTN_0729"/>
<dbReference type="KEGG" id="tna:CTN_0729"/>
<dbReference type="eggNOG" id="COG0192">
    <property type="taxonomic scope" value="Bacteria"/>
</dbReference>
<dbReference type="HOGENOM" id="CLU_041802_1_1_0"/>
<dbReference type="UniPathway" id="UPA00315">
    <property type="reaction ID" value="UER00080"/>
</dbReference>
<dbReference type="Proteomes" id="UP000000445">
    <property type="component" value="Chromosome"/>
</dbReference>
<dbReference type="GO" id="GO:0005737">
    <property type="term" value="C:cytoplasm"/>
    <property type="evidence" value="ECO:0007669"/>
    <property type="project" value="UniProtKB-SubCell"/>
</dbReference>
<dbReference type="GO" id="GO:0005524">
    <property type="term" value="F:ATP binding"/>
    <property type="evidence" value="ECO:0007669"/>
    <property type="project" value="UniProtKB-UniRule"/>
</dbReference>
<dbReference type="GO" id="GO:0000287">
    <property type="term" value="F:magnesium ion binding"/>
    <property type="evidence" value="ECO:0007669"/>
    <property type="project" value="UniProtKB-UniRule"/>
</dbReference>
<dbReference type="GO" id="GO:0004478">
    <property type="term" value="F:methionine adenosyltransferase activity"/>
    <property type="evidence" value="ECO:0007669"/>
    <property type="project" value="UniProtKB-UniRule"/>
</dbReference>
<dbReference type="GO" id="GO:0006730">
    <property type="term" value="P:one-carbon metabolic process"/>
    <property type="evidence" value="ECO:0007669"/>
    <property type="project" value="UniProtKB-KW"/>
</dbReference>
<dbReference type="GO" id="GO:0006556">
    <property type="term" value="P:S-adenosylmethionine biosynthetic process"/>
    <property type="evidence" value="ECO:0007669"/>
    <property type="project" value="UniProtKB-UniRule"/>
</dbReference>
<dbReference type="CDD" id="cd18079">
    <property type="entry name" value="S-AdoMet_synt"/>
    <property type="match status" value="1"/>
</dbReference>
<dbReference type="FunFam" id="3.30.300.10:FF:000003">
    <property type="entry name" value="S-adenosylmethionine synthase"/>
    <property type="match status" value="1"/>
</dbReference>
<dbReference type="FunFam" id="3.30.300.10:FF:000004">
    <property type="entry name" value="S-adenosylmethionine synthase"/>
    <property type="match status" value="1"/>
</dbReference>
<dbReference type="Gene3D" id="3.30.300.10">
    <property type="match status" value="3"/>
</dbReference>
<dbReference type="HAMAP" id="MF_00086">
    <property type="entry name" value="S_AdoMet_synth1"/>
    <property type="match status" value="1"/>
</dbReference>
<dbReference type="InterPro" id="IPR022631">
    <property type="entry name" value="ADOMET_SYNTHASE_CS"/>
</dbReference>
<dbReference type="InterPro" id="IPR022630">
    <property type="entry name" value="S-AdoMet_synt_C"/>
</dbReference>
<dbReference type="InterPro" id="IPR022629">
    <property type="entry name" value="S-AdoMet_synt_central"/>
</dbReference>
<dbReference type="InterPro" id="IPR022628">
    <property type="entry name" value="S-AdoMet_synt_N"/>
</dbReference>
<dbReference type="InterPro" id="IPR002133">
    <property type="entry name" value="S-AdoMet_synthetase"/>
</dbReference>
<dbReference type="InterPro" id="IPR022636">
    <property type="entry name" value="S-AdoMet_synthetase_sfam"/>
</dbReference>
<dbReference type="NCBIfam" id="TIGR01034">
    <property type="entry name" value="metK"/>
    <property type="match status" value="1"/>
</dbReference>
<dbReference type="PANTHER" id="PTHR11964">
    <property type="entry name" value="S-ADENOSYLMETHIONINE SYNTHETASE"/>
    <property type="match status" value="1"/>
</dbReference>
<dbReference type="Pfam" id="PF02773">
    <property type="entry name" value="S-AdoMet_synt_C"/>
    <property type="match status" value="1"/>
</dbReference>
<dbReference type="Pfam" id="PF02772">
    <property type="entry name" value="S-AdoMet_synt_M"/>
    <property type="match status" value="1"/>
</dbReference>
<dbReference type="Pfam" id="PF00438">
    <property type="entry name" value="S-AdoMet_synt_N"/>
    <property type="match status" value="1"/>
</dbReference>
<dbReference type="PIRSF" id="PIRSF000497">
    <property type="entry name" value="MAT"/>
    <property type="match status" value="1"/>
</dbReference>
<dbReference type="SUPFAM" id="SSF55973">
    <property type="entry name" value="S-adenosylmethionine synthetase"/>
    <property type="match status" value="3"/>
</dbReference>
<dbReference type="PROSITE" id="PS00376">
    <property type="entry name" value="ADOMET_SYNTHASE_1"/>
    <property type="match status" value="1"/>
</dbReference>
<dbReference type="PROSITE" id="PS00377">
    <property type="entry name" value="ADOMET_SYNTHASE_2"/>
    <property type="match status" value="1"/>
</dbReference>
<protein>
    <recommendedName>
        <fullName evidence="1">S-adenosylmethionine synthase</fullName>
        <shortName evidence="1">AdoMet synthase</shortName>
        <ecNumber evidence="1">2.5.1.6</ecNumber>
    </recommendedName>
    <alternativeName>
        <fullName evidence="1">MAT</fullName>
    </alternativeName>
    <alternativeName>
        <fullName evidence="1">Methionine adenosyltransferase</fullName>
    </alternativeName>
</protein>
<evidence type="ECO:0000255" key="1">
    <source>
        <dbReference type="HAMAP-Rule" id="MF_00086"/>
    </source>
</evidence>
<name>METK_THENN</name>
<sequence length="395" mass="43632">MRRLFTSESVTEGHPDKVADQISDAILDAMLEQDPKSRVAVETLVTTGLVIVAGEVTTRAYVEIPDIVRKTILEIGYTRAKYGFDGETCGVLTSIHSQSPDIALGVDKALEVKSGEEVADELEALGAGDQGIMFGYATNETPEYMPLPITLAHRLAMRLAEVRKKGILPFLRPDGKTQVTIEYEDDKPVRVDTVLISTQHDPDISQADLREAIIEHVINPVIPEEYRDDKMKILVNPTGRFVLGGPMADTGLTGRKIIVDTYGGWVPHGGGAFSGKDPTKVDRSAHYMARYVAKNVVAAGLADKFLIQLSYAIGVAKPVSILIDTFGTAKVDEEKLLKVITEIFDFRPGAIIKKLNLLRPIYRKTAAYGHFGRNEEEFTWEKLDMVDELKRAFNM</sequence>
<feature type="chain" id="PRO_1000196735" description="S-adenosylmethionine synthase">
    <location>
        <begin position="1"/>
        <end position="395"/>
    </location>
</feature>
<feature type="region of interest" description="Flexible loop" evidence="1">
    <location>
        <begin position="98"/>
        <end position="108"/>
    </location>
</feature>
<feature type="binding site" description="in other chain" evidence="1">
    <location>
        <position position="14"/>
    </location>
    <ligand>
        <name>ATP</name>
        <dbReference type="ChEBI" id="CHEBI:30616"/>
        <note>ligand shared between two neighboring subunits</note>
    </ligand>
</feature>
<feature type="binding site" evidence="1">
    <location>
        <position position="16"/>
    </location>
    <ligand>
        <name>Mg(2+)</name>
        <dbReference type="ChEBI" id="CHEBI:18420"/>
    </ligand>
</feature>
<feature type="binding site" evidence="1">
    <location>
        <position position="42"/>
    </location>
    <ligand>
        <name>K(+)</name>
        <dbReference type="ChEBI" id="CHEBI:29103"/>
    </ligand>
</feature>
<feature type="binding site" description="in other chain" evidence="1">
    <location>
        <position position="55"/>
    </location>
    <ligand>
        <name>L-methionine</name>
        <dbReference type="ChEBI" id="CHEBI:57844"/>
        <note>ligand shared between two neighboring subunits</note>
    </ligand>
</feature>
<feature type="binding site" description="in other chain" evidence="1">
    <location>
        <position position="98"/>
    </location>
    <ligand>
        <name>L-methionine</name>
        <dbReference type="ChEBI" id="CHEBI:57844"/>
        <note>ligand shared between two neighboring subunits</note>
    </ligand>
</feature>
<feature type="binding site" description="in other chain" evidence="1">
    <location>
        <begin position="174"/>
        <end position="176"/>
    </location>
    <ligand>
        <name>ATP</name>
        <dbReference type="ChEBI" id="CHEBI:30616"/>
        <note>ligand shared between two neighboring subunits</note>
    </ligand>
</feature>
<feature type="binding site" description="in other chain" evidence="1">
    <location>
        <begin position="240"/>
        <end position="241"/>
    </location>
    <ligand>
        <name>ATP</name>
        <dbReference type="ChEBI" id="CHEBI:30616"/>
        <note>ligand shared between two neighboring subunits</note>
    </ligand>
</feature>
<feature type="binding site" evidence="1">
    <location>
        <position position="249"/>
    </location>
    <ligand>
        <name>ATP</name>
        <dbReference type="ChEBI" id="CHEBI:30616"/>
        <note>ligand shared between two neighboring subunits</note>
    </ligand>
</feature>
<feature type="binding site" evidence="1">
    <location>
        <position position="249"/>
    </location>
    <ligand>
        <name>L-methionine</name>
        <dbReference type="ChEBI" id="CHEBI:57844"/>
        <note>ligand shared between two neighboring subunits</note>
    </ligand>
</feature>
<feature type="binding site" description="in other chain" evidence="1">
    <location>
        <begin position="255"/>
        <end position="256"/>
    </location>
    <ligand>
        <name>ATP</name>
        <dbReference type="ChEBI" id="CHEBI:30616"/>
        <note>ligand shared between two neighboring subunits</note>
    </ligand>
</feature>
<feature type="binding site" evidence="1">
    <location>
        <position position="272"/>
    </location>
    <ligand>
        <name>ATP</name>
        <dbReference type="ChEBI" id="CHEBI:30616"/>
        <note>ligand shared between two neighboring subunits</note>
    </ligand>
</feature>
<feature type="binding site" evidence="1">
    <location>
        <position position="276"/>
    </location>
    <ligand>
        <name>ATP</name>
        <dbReference type="ChEBI" id="CHEBI:30616"/>
        <note>ligand shared between two neighboring subunits</note>
    </ligand>
</feature>
<feature type="binding site" description="in other chain" evidence="1">
    <location>
        <position position="280"/>
    </location>
    <ligand>
        <name>L-methionine</name>
        <dbReference type="ChEBI" id="CHEBI:57844"/>
        <note>ligand shared between two neighboring subunits</note>
    </ligand>
</feature>
<gene>
    <name evidence="1" type="primary">metK</name>
    <name type="ordered locus">CTN_0729</name>
</gene>
<organism>
    <name type="scientific">Thermotoga neapolitana (strain ATCC 49049 / DSM 4359 / NBRC 107923 / NS-E)</name>
    <dbReference type="NCBI Taxonomy" id="309803"/>
    <lineage>
        <taxon>Bacteria</taxon>
        <taxon>Thermotogati</taxon>
        <taxon>Thermotogota</taxon>
        <taxon>Thermotogae</taxon>
        <taxon>Thermotogales</taxon>
        <taxon>Thermotogaceae</taxon>
        <taxon>Thermotoga</taxon>
    </lineage>
</organism>
<comment type="function">
    <text evidence="1">Catalyzes the formation of S-adenosylmethionine (AdoMet) from methionine and ATP. The overall synthetic reaction is composed of two sequential steps, AdoMet formation and the subsequent tripolyphosphate hydrolysis which occurs prior to release of AdoMet from the enzyme.</text>
</comment>
<comment type="catalytic activity">
    <reaction evidence="1">
        <text>L-methionine + ATP + H2O = S-adenosyl-L-methionine + phosphate + diphosphate</text>
        <dbReference type="Rhea" id="RHEA:21080"/>
        <dbReference type="ChEBI" id="CHEBI:15377"/>
        <dbReference type="ChEBI" id="CHEBI:30616"/>
        <dbReference type="ChEBI" id="CHEBI:33019"/>
        <dbReference type="ChEBI" id="CHEBI:43474"/>
        <dbReference type="ChEBI" id="CHEBI:57844"/>
        <dbReference type="ChEBI" id="CHEBI:59789"/>
        <dbReference type="EC" id="2.5.1.6"/>
    </reaction>
</comment>
<comment type="cofactor">
    <cofactor evidence="1">
        <name>Mg(2+)</name>
        <dbReference type="ChEBI" id="CHEBI:18420"/>
    </cofactor>
    <text evidence="1">Binds 2 divalent ions per subunit.</text>
</comment>
<comment type="cofactor">
    <cofactor evidence="1">
        <name>K(+)</name>
        <dbReference type="ChEBI" id="CHEBI:29103"/>
    </cofactor>
    <text evidence="1">Binds 1 potassium ion per subunit.</text>
</comment>
<comment type="pathway">
    <text evidence="1">Amino-acid biosynthesis; S-adenosyl-L-methionine biosynthesis; S-adenosyl-L-methionine from L-methionine: step 1/1.</text>
</comment>
<comment type="subunit">
    <text evidence="1">Homotetramer; dimer of dimers.</text>
</comment>
<comment type="subcellular location">
    <subcellularLocation>
        <location evidence="1">Cytoplasm</location>
    </subcellularLocation>
</comment>
<comment type="similarity">
    <text evidence="1">Belongs to the AdoMet synthase family.</text>
</comment>